<evidence type="ECO:0000255" key="1">
    <source>
        <dbReference type="HAMAP-Rule" id="MF_01309"/>
    </source>
</evidence>
<evidence type="ECO:0000305" key="2"/>
<keyword id="KW-0687">Ribonucleoprotein</keyword>
<keyword id="KW-0689">Ribosomal protein</keyword>
<keyword id="KW-0694">RNA-binding</keyword>
<keyword id="KW-0699">rRNA-binding</keyword>
<comment type="function">
    <text evidence="1">Binds the lower part of the 30S subunit head. Binds mRNA in the 70S ribosome, positioning it for translation.</text>
</comment>
<comment type="subunit">
    <text evidence="1">Part of the 30S ribosomal subunit. Forms a tight complex with proteins S10 and S14.</text>
</comment>
<comment type="similarity">
    <text evidence="1">Belongs to the universal ribosomal protein uS3 family.</text>
</comment>
<sequence length="276" mass="31477">MGQKVHPYSLRIKINRDWKSKWYFDKKLYSEILHEDFLIRRETMKFLKGIKFDISDIEIIRNNLQRVTVVISTPRPGSVIGVKGANLEKIGQLLTRKVSKKINIKIKEIKKPEFDAQIVANGIAKQLENRASYRKLLKSSLLSSISKGIQGIKIKVSGRLGGAEIARSFEVKEGRIPLHTLRANIDYGFAEAYTTYGVIGVKVWLFKGEILGKQINSDAGQVINRKPSKDKVERFDKGKIDDKGRKVVNDDKFSREKLEIGSRSKNDFKNKNDSDI</sequence>
<dbReference type="EMBL" id="CP000993">
    <property type="protein sequence ID" value="ACH94722.1"/>
    <property type="molecule type" value="Genomic_DNA"/>
</dbReference>
<dbReference type="RefSeq" id="WP_012538238.1">
    <property type="nucleotide sequence ID" value="NZ_CP169983.1"/>
</dbReference>
<dbReference type="SMR" id="B5RPI8"/>
<dbReference type="KEGG" id="bre:BRE_490"/>
<dbReference type="HOGENOM" id="CLU_058591_0_2_12"/>
<dbReference type="Proteomes" id="UP000000612">
    <property type="component" value="Chromosome"/>
</dbReference>
<dbReference type="GO" id="GO:0022627">
    <property type="term" value="C:cytosolic small ribosomal subunit"/>
    <property type="evidence" value="ECO:0007669"/>
    <property type="project" value="TreeGrafter"/>
</dbReference>
<dbReference type="GO" id="GO:0003729">
    <property type="term" value="F:mRNA binding"/>
    <property type="evidence" value="ECO:0007669"/>
    <property type="project" value="UniProtKB-UniRule"/>
</dbReference>
<dbReference type="GO" id="GO:0019843">
    <property type="term" value="F:rRNA binding"/>
    <property type="evidence" value="ECO:0007669"/>
    <property type="project" value="UniProtKB-UniRule"/>
</dbReference>
<dbReference type="GO" id="GO:0003735">
    <property type="term" value="F:structural constituent of ribosome"/>
    <property type="evidence" value="ECO:0007669"/>
    <property type="project" value="InterPro"/>
</dbReference>
<dbReference type="GO" id="GO:0006412">
    <property type="term" value="P:translation"/>
    <property type="evidence" value="ECO:0007669"/>
    <property type="project" value="UniProtKB-UniRule"/>
</dbReference>
<dbReference type="CDD" id="cd02412">
    <property type="entry name" value="KH-II_30S_S3"/>
    <property type="match status" value="1"/>
</dbReference>
<dbReference type="FunFam" id="3.30.300.20:FF:000001">
    <property type="entry name" value="30S ribosomal protein S3"/>
    <property type="match status" value="1"/>
</dbReference>
<dbReference type="Gene3D" id="3.30.300.20">
    <property type="match status" value="1"/>
</dbReference>
<dbReference type="Gene3D" id="3.30.1140.32">
    <property type="entry name" value="Ribosomal protein S3, C-terminal domain"/>
    <property type="match status" value="1"/>
</dbReference>
<dbReference type="HAMAP" id="MF_01309_B">
    <property type="entry name" value="Ribosomal_uS3_B"/>
    <property type="match status" value="1"/>
</dbReference>
<dbReference type="InterPro" id="IPR004087">
    <property type="entry name" value="KH_dom"/>
</dbReference>
<dbReference type="InterPro" id="IPR015946">
    <property type="entry name" value="KH_dom-like_a/b"/>
</dbReference>
<dbReference type="InterPro" id="IPR004044">
    <property type="entry name" value="KH_dom_type_2"/>
</dbReference>
<dbReference type="InterPro" id="IPR009019">
    <property type="entry name" value="KH_sf_prok-type"/>
</dbReference>
<dbReference type="InterPro" id="IPR036419">
    <property type="entry name" value="Ribosomal_S3_C_sf"/>
</dbReference>
<dbReference type="InterPro" id="IPR005704">
    <property type="entry name" value="Ribosomal_uS3_bac-typ"/>
</dbReference>
<dbReference type="InterPro" id="IPR001351">
    <property type="entry name" value="Ribosomal_uS3_C"/>
</dbReference>
<dbReference type="InterPro" id="IPR018280">
    <property type="entry name" value="Ribosomal_uS3_CS"/>
</dbReference>
<dbReference type="NCBIfam" id="TIGR01009">
    <property type="entry name" value="rpsC_bact"/>
    <property type="match status" value="1"/>
</dbReference>
<dbReference type="PANTHER" id="PTHR11760">
    <property type="entry name" value="30S/40S RIBOSOMAL PROTEIN S3"/>
    <property type="match status" value="1"/>
</dbReference>
<dbReference type="PANTHER" id="PTHR11760:SF19">
    <property type="entry name" value="SMALL RIBOSOMAL SUBUNIT PROTEIN US3C"/>
    <property type="match status" value="1"/>
</dbReference>
<dbReference type="Pfam" id="PF07650">
    <property type="entry name" value="KH_2"/>
    <property type="match status" value="1"/>
</dbReference>
<dbReference type="Pfam" id="PF00189">
    <property type="entry name" value="Ribosomal_S3_C"/>
    <property type="match status" value="1"/>
</dbReference>
<dbReference type="SMART" id="SM00322">
    <property type="entry name" value="KH"/>
    <property type="match status" value="1"/>
</dbReference>
<dbReference type="SUPFAM" id="SSF54814">
    <property type="entry name" value="Prokaryotic type KH domain (KH-domain type II)"/>
    <property type="match status" value="1"/>
</dbReference>
<dbReference type="SUPFAM" id="SSF54821">
    <property type="entry name" value="Ribosomal protein S3 C-terminal domain"/>
    <property type="match status" value="1"/>
</dbReference>
<dbReference type="PROSITE" id="PS50823">
    <property type="entry name" value="KH_TYPE_2"/>
    <property type="match status" value="1"/>
</dbReference>
<dbReference type="PROSITE" id="PS00548">
    <property type="entry name" value="RIBOSOMAL_S3"/>
    <property type="match status" value="1"/>
</dbReference>
<name>RS3_BORRA</name>
<protein>
    <recommendedName>
        <fullName evidence="1">Small ribosomal subunit protein uS3</fullName>
    </recommendedName>
    <alternativeName>
        <fullName evidence="2">30S ribosomal protein S3</fullName>
    </alternativeName>
</protein>
<proteinExistence type="inferred from homology"/>
<gene>
    <name evidence="1" type="primary">rpsC</name>
    <name type="ordered locus">BRE_490</name>
</gene>
<accession>B5RPI8</accession>
<reference key="1">
    <citation type="journal article" date="2008" name="PLoS Genet.">
        <title>The genome of Borrelia recurrentis, the agent of deadly louse-borne relapsing fever, is a degraded subset of tick-borne Borrelia duttonii.</title>
        <authorList>
            <person name="Lescot M."/>
            <person name="Audic S."/>
            <person name="Robert C."/>
            <person name="Nguyen T.T."/>
            <person name="Blanc G."/>
            <person name="Cutler S.J."/>
            <person name="Wincker P."/>
            <person name="Couloux A."/>
            <person name="Claverie J.-M."/>
            <person name="Raoult D."/>
            <person name="Drancourt M."/>
        </authorList>
    </citation>
    <scope>NUCLEOTIDE SEQUENCE [LARGE SCALE GENOMIC DNA]</scope>
    <source>
        <strain>A1</strain>
    </source>
</reference>
<feature type="chain" id="PRO_1000140928" description="Small ribosomal subunit protein uS3">
    <location>
        <begin position="1"/>
        <end position="276"/>
    </location>
</feature>
<feature type="domain" description="KH type-2" evidence="1">
    <location>
        <begin position="39"/>
        <end position="110"/>
    </location>
</feature>
<organism>
    <name type="scientific">Borrelia recurrentis (strain A1)</name>
    <dbReference type="NCBI Taxonomy" id="412418"/>
    <lineage>
        <taxon>Bacteria</taxon>
        <taxon>Pseudomonadati</taxon>
        <taxon>Spirochaetota</taxon>
        <taxon>Spirochaetia</taxon>
        <taxon>Spirochaetales</taxon>
        <taxon>Borreliaceae</taxon>
        <taxon>Borrelia</taxon>
    </lineage>
</organism>